<evidence type="ECO:0000255" key="1">
    <source>
        <dbReference type="HAMAP-Rule" id="MF_01320"/>
    </source>
</evidence>
<evidence type="ECO:0000256" key="2">
    <source>
        <dbReference type="SAM" id="MobiDB-lite"/>
    </source>
</evidence>
<evidence type="ECO:0000305" key="3"/>
<reference key="1">
    <citation type="journal article" date="2004" name="Nat. Genet.">
        <title>Evidence in the Legionella pneumophila genome for exploitation of host cell functions and high genome plasticity.</title>
        <authorList>
            <person name="Cazalet C."/>
            <person name="Rusniok C."/>
            <person name="Brueggemann H."/>
            <person name="Zidane N."/>
            <person name="Magnier A."/>
            <person name="Ma L."/>
            <person name="Tichit M."/>
            <person name="Jarraud S."/>
            <person name="Bouchier C."/>
            <person name="Vandenesch F."/>
            <person name="Kunst F."/>
            <person name="Etienne J."/>
            <person name="Glaser P."/>
            <person name="Buchrieser C."/>
        </authorList>
    </citation>
    <scope>NUCLEOTIDE SEQUENCE [LARGE SCALE GENOMIC DNA]</scope>
    <source>
        <strain>Lens</strain>
    </source>
</reference>
<dbReference type="EMBL" id="CR628337">
    <property type="protein sequence ID" value="CAH14603.1"/>
    <property type="molecule type" value="Genomic_DNA"/>
</dbReference>
<dbReference type="RefSeq" id="WP_011214626.1">
    <property type="nucleotide sequence ID" value="NC_006369.1"/>
</dbReference>
<dbReference type="SMR" id="Q5WZK9"/>
<dbReference type="KEGG" id="lpf:lpl0372"/>
<dbReference type="LegioList" id="lpl0372"/>
<dbReference type="HOGENOM" id="CLU_036235_2_1_6"/>
<dbReference type="Proteomes" id="UP000002517">
    <property type="component" value="Chromosome"/>
</dbReference>
<dbReference type="GO" id="GO:0015934">
    <property type="term" value="C:large ribosomal subunit"/>
    <property type="evidence" value="ECO:0007669"/>
    <property type="project" value="InterPro"/>
</dbReference>
<dbReference type="GO" id="GO:0019843">
    <property type="term" value="F:rRNA binding"/>
    <property type="evidence" value="ECO:0007669"/>
    <property type="project" value="UniProtKB-UniRule"/>
</dbReference>
<dbReference type="GO" id="GO:0003735">
    <property type="term" value="F:structural constituent of ribosome"/>
    <property type="evidence" value="ECO:0007669"/>
    <property type="project" value="InterPro"/>
</dbReference>
<dbReference type="GO" id="GO:0016740">
    <property type="term" value="F:transferase activity"/>
    <property type="evidence" value="ECO:0007669"/>
    <property type="project" value="InterPro"/>
</dbReference>
<dbReference type="GO" id="GO:0002181">
    <property type="term" value="P:cytoplasmic translation"/>
    <property type="evidence" value="ECO:0007669"/>
    <property type="project" value="TreeGrafter"/>
</dbReference>
<dbReference type="FunFam" id="2.30.30.30:FF:000001">
    <property type="entry name" value="50S ribosomal protein L2"/>
    <property type="match status" value="1"/>
</dbReference>
<dbReference type="FunFam" id="2.40.50.140:FF:000003">
    <property type="entry name" value="50S ribosomal protein L2"/>
    <property type="match status" value="1"/>
</dbReference>
<dbReference type="FunFam" id="4.10.950.10:FF:000001">
    <property type="entry name" value="50S ribosomal protein L2"/>
    <property type="match status" value="1"/>
</dbReference>
<dbReference type="Gene3D" id="2.30.30.30">
    <property type="match status" value="1"/>
</dbReference>
<dbReference type="Gene3D" id="2.40.50.140">
    <property type="entry name" value="Nucleic acid-binding proteins"/>
    <property type="match status" value="1"/>
</dbReference>
<dbReference type="Gene3D" id="4.10.950.10">
    <property type="entry name" value="Ribosomal protein L2, domain 3"/>
    <property type="match status" value="1"/>
</dbReference>
<dbReference type="HAMAP" id="MF_01320_B">
    <property type="entry name" value="Ribosomal_uL2_B"/>
    <property type="match status" value="1"/>
</dbReference>
<dbReference type="InterPro" id="IPR012340">
    <property type="entry name" value="NA-bd_OB-fold"/>
</dbReference>
<dbReference type="InterPro" id="IPR014722">
    <property type="entry name" value="Rib_uL2_dom2"/>
</dbReference>
<dbReference type="InterPro" id="IPR002171">
    <property type="entry name" value="Ribosomal_uL2"/>
</dbReference>
<dbReference type="InterPro" id="IPR005880">
    <property type="entry name" value="Ribosomal_uL2_bac/org-type"/>
</dbReference>
<dbReference type="InterPro" id="IPR022669">
    <property type="entry name" value="Ribosomal_uL2_C"/>
</dbReference>
<dbReference type="InterPro" id="IPR022671">
    <property type="entry name" value="Ribosomal_uL2_CS"/>
</dbReference>
<dbReference type="InterPro" id="IPR014726">
    <property type="entry name" value="Ribosomal_uL2_dom3"/>
</dbReference>
<dbReference type="InterPro" id="IPR022666">
    <property type="entry name" value="Ribosomal_uL2_RNA-bd_dom"/>
</dbReference>
<dbReference type="InterPro" id="IPR008991">
    <property type="entry name" value="Translation_prot_SH3-like_sf"/>
</dbReference>
<dbReference type="NCBIfam" id="TIGR01171">
    <property type="entry name" value="rplB_bact"/>
    <property type="match status" value="1"/>
</dbReference>
<dbReference type="PANTHER" id="PTHR13691:SF5">
    <property type="entry name" value="LARGE RIBOSOMAL SUBUNIT PROTEIN UL2M"/>
    <property type="match status" value="1"/>
</dbReference>
<dbReference type="PANTHER" id="PTHR13691">
    <property type="entry name" value="RIBOSOMAL PROTEIN L2"/>
    <property type="match status" value="1"/>
</dbReference>
<dbReference type="Pfam" id="PF00181">
    <property type="entry name" value="Ribosomal_L2"/>
    <property type="match status" value="1"/>
</dbReference>
<dbReference type="Pfam" id="PF03947">
    <property type="entry name" value="Ribosomal_L2_C"/>
    <property type="match status" value="1"/>
</dbReference>
<dbReference type="PIRSF" id="PIRSF002158">
    <property type="entry name" value="Ribosomal_L2"/>
    <property type="match status" value="1"/>
</dbReference>
<dbReference type="SMART" id="SM01383">
    <property type="entry name" value="Ribosomal_L2"/>
    <property type="match status" value="1"/>
</dbReference>
<dbReference type="SMART" id="SM01382">
    <property type="entry name" value="Ribosomal_L2_C"/>
    <property type="match status" value="1"/>
</dbReference>
<dbReference type="SUPFAM" id="SSF50249">
    <property type="entry name" value="Nucleic acid-binding proteins"/>
    <property type="match status" value="1"/>
</dbReference>
<dbReference type="SUPFAM" id="SSF50104">
    <property type="entry name" value="Translation proteins SH3-like domain"/>
    <property type="match status" value="1"/>
</dbReference>
<dbReference type="PROSITE" id="PS00467">
    <property type="entry name" value="RIBOSOMAL_L2"/>
    <property type="match status" value="1"/>
</dbReference>
<keyword id="KW-0687">Ribonucleoprotein</keyword>
<keyword id="KW-0689">Ribosomal protein</keyword>
<keyword id="KW-0694">RNA-binding</keyword>
<keyword id="KW-0699">rRNA-binding</keyword>
<accession>Q5WZK9</accession>
<sequence>MALLKSKPTSPGKRGEIRVVHHHIYKGKPHAALVEKLKKTGGRNNQGRITVRHIGGGQRQKYRIIDFKRNKDGILGRVERLEYDPNRTALIALISYKDGEKRYIIAPSNLEVGATIQSGADSPISVGNCLPLKNIPVGTTIHCVEMKPGKGAQMLRSAGCSGQLVAKEGVYATLRLRSGEMRKIHVLCRAVIGEVSNSEHNLRALGKAGAKRWRGIRPTVRGVAMNPVDHPHGGGEGRTSGGRHPVSPWGLPTKGYKTRSNKRTDTFIVRGRKKK</sequence>
<organism>
    <name type="scientific">Legionella pneumophila (strain Lens)</name>
    <dbReference type="NCBI Taxonomy" id="297245"/>
    <lineage>
        <taxon>Bacteria</taxon>
        <taxon>Pseudomonadati</taxon>
        <taxon>Pseudomonadota</taxon>
        <taxon>Gammaproteobacteria</taxon>
        <taxon>Legionellales</taxon>
        <taxon>Legionellaceae</taxon>
        <taxon>Legionella</taxon>
    </lineage>
</organism>
<feature type="chain" id="PRO_0000237198" description="Large ribosomal subunit protein uL2">
    <location>
        <begin position="1"/>
        <end position="275"/>
    </location>
</feature>
<feature type="region of interest" description="Disordered" evidence="2">
    <location>
        <begin position="223"/>
        <end position="260"/>
    </location>
</feature>
<gene>
    <name evidence="1" type="primary">rplB</name>
    <name type="ordered locus">lpl0372</name>
</gene>
<protein>
    <recommendedName>
        <fullName evidence="1">Large ribosomal subunit protein uL2</fullName>
    </recommendedName>
    <alternativeName>
        <fullName evidence="3">50S ribosomal protein L2</fullName>
    </alternativeName>
</protein>
<proteinExistence type="inferred from homology"/>
<name>RL2_LEGPL</name>
<comment type="function">
    <text evidence="1">One of the primary rRNA binding proteins. Required for association of the 30S and 50S subunits to form the 70S ribosome, for tRNA binding and peptide bond formation. It has been suggested to have peptidyltransferase activity; this is somewhat controversial. Makes several contacts with the 16S rRNA in the 70S ribosome.</text>
</comment>
<comment type="subunit">
    <text evidence="1">Part of the 50S ribosomal subunit. Forms a bridge to the 30S subunit in the 70S ribosome.</text>
</comment>
<comment type="similarity">
    <text evidence="1">Belongs to the universal ribosomal protein uL2 family.</text>
</comment>